<accession>A9QYG3</accession>
<evidence type="ECO:0000255" key="1">
    <source>
        <dbReference type="HAMAP-Rule" id="MF_00555"/>
    </source>
</evidence>
<gene>
    <name evidence="1" type="primary">asnA</name>
    <name type="ordered locus">YpAngola_A0003</name>
</gene>
<organism>
    <name type="scientific">Yersinia pestis bv. Antiqua (strain Angola)</name>
    <dbReference type="NCBI Taxonomy" id="349746"/>
    <lineage>
        <taxon>Bacteria</taxon>
        <taxon>Pseudomonadati</taxon>
        <taxon>Pseudomonadota</taxon>
        <taxon>Gammaproteobacteria</taxon>
        <taxon>Enterobacterales</taxon>
        <taxon>Yersiniaceae</taxon>
        <taxon>Yersinia</taxon>
    </lineage>
</organism>
<proteinExistence type="inferred from homology"/>
<keyword id="KW-0028">Amino-acid biosynthesis</keyword>
<keyword id="KW-0061">Asparagine biosynthesis</keyword>
<keyword id="KW-0067">ATP-binding</keyword>
<keyword id="KW-0963">Cytoplasm</keyword>
<keyword id="KW-0436">Ligase</keyword>
<keyword id="KW-0547">Nucleotide-binding</keyword>
<dbReference type="EC" id="6.3.1.1" evidence="1"/>
<dbReference type="EMBL" id="CP000901">
    <property type="protein sequence ID" value="ABX86664.1"/>
    <property type="molecule type" value="Genomic_DNA"/>
</dbReference>
<dbReference type="RefSeq" id="WP_002212256.1">
    <property type="nucleotide sequence ID" value="NZ_CP009935.1"/>
</dbReference>
<dbReference type="SMR" id="A9QYG3"/>
<dbReference type="GeneID" id="57974591"/>
<dbReference type="KEGG" id="ypg:YpAngola_A0003"/>
<dbReference type="PATRIC" id="fig|349746.12.peg.951"/>
<dbReference type="UniPathway" id="UPA00134">
    <property type="reaction ID" value="UER00194"/>
</dbReference>
<dbReference type="GO" id="GO:0005829">
    <property type="term" value="C:cytosol"/>
    <property type="evidence" value="ECO:0007669"/>
    <property type="project" value="TreeGrafter"/>
</dbReference>
<dbReference type="GO" id="GO:0004071">
    <property type="term" value="F:aspartate-ammonia ligase activity"/>
    <property type="evidence" value="ECO:0007669"/>
    <property type="project" value="UniProtKB-UniRule"/>
</dbReference>
<dbReference type="GO" id="GO:0005524">
    <property type="term" value="F:ATP binding"/>
    <property type="evidence" value="ECO:0007669"/>
    <property type="project" value="UniProtKB-UniRule"/>
</dbReference>
<dbReference type="GO" id="GO:0070981">
    <property type="term" value="P:L-asparagine biosynthetic process"/>
    <property type="evidence" value="ECO:0007669"/>
    <property type="project" value="UniProtKB-UniRule"/>
</dbReference>
<dbReference type="Gene3D" id="3.30.930.10">
    <property type="entry name" value="Bira Bifunctional Protein, Domain 2"/>
    <property type="match status" value="1"/>
</dbReference>
<dbReference type="HAMAP" id="MF_00555">
    <property type="entry name" value="AsnA"/>
    <property type="match status" value="1"/>
</dbReference>
<dbReference type="InterPro" id="IPR006195">
    <property type="entry name" value="aa-tRNA-synth_II"/>
</dbReference>
<dbReference type="InterPro" id="IPR045864">
    <property type="entry name" value="aa-tRNA-synth_II/BPL/LPL"/>
</dbReference>
<dbReference type="InterPro" id="IPR004618">
    <property type="entry name" value="AsnA"/>
</dbReference>
<dbReference type="NCBIfam" id="TIGR00669">
    <property type="entry name" value="asnA"/>
    <property type="match status" value="1"/>
</dbReference>
<dbReference type="PANTHER" id="PTHR30073">
    <property type="entry name" value="ASPARTATE--AMMONIA LIGASE"/>
    <property type="match status" value="1"/>
</dbReference>
<dbReference type="PANTHER" id="PTHR30073:SF5">
    <property type="entry name" value="ASPARTATE--AMMONIA LIGASE"/>
    <property type="match status" value="1"/>
</dbReference>
<dbReference type="Pfam" id="PF03590">
    <property type="entry name" value="AsnA"/>
    <property type="match status" value="1"/>
</dbReference>
<dbReference type="PIRSF" id="PIRSF001555">
    <property type="entry name" value="Asp_ammon_ligase"/>
    <property type="match status" value="1"/>
</dbReference>
<dbReference type="SUPFAM" id="SSF55681">
    <property type="entry name" value="Class II aaRS and biotin synthetases"/>
    <property type="match status" value="1"/>
</dbReference>
<dbReference type="PROSITE" id="PS50862">
    <property type="entry name" value="AA_TRNA_LIGASE_II"/>
    <property type="match status" value="1"/>
</dbReference>
<comment type="catalytic activity">
    <reaction evidence="1">
        <text>L-aspartate + NH4(+) + ATP = L-asparagine + AMP + diphosphate + H(+)</text>
        <dbReference type="Rhea" id="RHEA:11372"/>
        <dbReference type="ChEBI" id="CHEBI:15378"/>
        <dbReference type="ChEBI" id="CHEBI:28938"/>
        <dbReference type="ChEBI" id="CHEBI:29991"/>
        <dbReference type="ChEBI" id="CHEBI:30616"/>
        <dbReference type="ChEBI" id="CHEBI:33019"/>
        <dbReference type="ChEBI" id="CHEBI:58048"/>
        <dbReference type="ChEBI" id="CHEBI:456215"/>
        <dbReference type="EC" id="6.3.1.1"/>
    </reaction>
</comment>
<comment type="pathway">
    <text evidence="1">Amino-acid biosynthesis; L-asparagine biosynthesis; L-asparagine from L-aspartate (ammonia route): step 1/1.</text>
</comment>
<comment type="subcellular location">
    <subcellularLocation>
        <location evidence="1">Cytoplasm</location>
    </subcellularLocation>
</comment>
<comment type="similarity">
    <text evidence="1">Belongs to the class-II aminoacyl-tRNA synthetase family. AsnA subfamily.</text>
</comment>
<feature type="chain" id="PRO_1000129139" description="Aspartate--ammonia ligase">
    <location>
        <begin position="1"/>
        <end position="330"/>
    </location>
</feature>
<sequence length="330" mass="36828">MKKQFIQKQQQISFVKSFFSRQLEQQLGLIEVQAPILSRVGDGTQDNLSGSEKAVQVKVKSLPDSTFEVVHSLAKWKRKTLGRFDFGADQGVYTHMKALRPDEDRLSAIHSVYVDQWDWERVMGDGERNLAYLKSTVNKIYAAIKETEAAISAEFGVKPFLPDHIQFIHSESLRARFPDLDAKGRERAIAKELGAVFLIGIGGKLADGQSHDVRAPDYDDWTSPSAEGFSGLNGDIIVWNPILEDAFEISSMGIRVDAEALKRQLALTGDEDRLELEWHQSLLRGEMPQTIGGGIGQSRLVMLLLQKQHIGQVQCGVWGPEISEKVDGLL</sequence>
<reference key="1">
    <citation type="journal article" date="2010" name="J. Bacteriol.">
        <title>Genome sequence of the deep-rooted Yersinia pestis strain Angola reveals new insights into the evolution and pangenome of the plague bacterium.</title>
        <authorList>
            <person name="Eppinger M."/>
            <person name="Worsham P.L."/>
            <person name="Nikolich M.P."/>
            <person name="Riley D.R."/>
            <person name="Sebastian Y."/>
            <person name="Mou S."/>
            <person name="Achtman M."/>
            <person name="Lindler L.E."/>
            <person name="Ravel J."/>
        </authorList>
    </citation>
    <scope>NUCLEOTIDE SEQUENCE [LARGE SCALE GENOMIC DNA]</scope>
    <source>
        <strain>Angola</strain>
    </source>
</reference>
<protein>
    <recommendedName>
        <fullName evidence="1">Aspartate--ammonia ligase</fullName>
        <ecNumber evidence="1">6.3.1.1</ecNumber>
    </recommendedName>
    <alternativeName>
        <fullName evidence="1">Asparagine synthetase A</fullName>
    </alternativeName>
</protein>
<name>ASNA_YERPG</name>